<feature type="chain" id="PRO_0000312579" description="Zinc transporter 6">
    <location>
        <begin position="1"/>
        <end position="464"/>
    </location>
</feature>
<feature type="topological domain" description="Cytoplasmic" evidence="2">
    <location>
        <begin position="1"/>
        <end position="33"/>
    </location>
</feature>
<feature type="transmembrane region" description="Helical" evidence="2">
    <location>
        <begin position="34"/>
        <end position="54"/>
    </location>
</feature>
<feature type="topological domain" description="Extracellular" evidence="2">
    <location>
        <begin position="55"/>
        <end position="64"/>
    </location>
</feature>
<feature type="transmembrane region" description="Helical" evidence="2">
    <location>
        <begin position="65"/>
        <end position="85"/>
    </location>
</feature>
<feature type="topological domain" description="Cytoplasmic" evidence="2">
    <location>
        <begin position="86"/>
        <end position="98"/>
    </location>
</feature>
<feature type="transmembrane region" description="Helical" evidence="2">
    <location>
        <begin position="99"/>
        <end position="119"/>
    </location>
</feature>
<feature type="topological domain" description="Extracellular" evidence="2">
    <location>
        <begin position="120"/>
        <end position="134"/>
    </location>
</feature>
<feature type="transmembrane region" description="Helical" evidence="2">
    <location>
        <begin position="135"/>
        <end position="155"/>
    </location>
</feature>
<feature type="topological domain" description="Cytoplasmic" evidence="2">
    <location>
        <begin position="156"/>
        <end position="200"/>
    </location>
</feature>
<feature type="transmembrane region" description="Helical" evidence="2">
    <location>
        <begin position="201"/>
        <end position="221"/>
    </location>
</feature>
<feature type="topological domain" description="Extracellular" evidence="2">
    <location>
        <begin position="222"/>
        <end position="228"/>
    </location>
</feature>
<feature type="transmembrane region" description="Helical" evidence="2">
    <location>
        <begin position="229"/>
        <end position="249"/>
    </location>
</feature>
<feature type="topological domain" description="Cytoplasmic" evidence="2">
    <location>
        <begin position="250"/>
        <end position="464"/>
    </location>
</feature>
<sequence>MGTIYLFRKTQRSLLGKLTQEFRLVTADRRSWKILLFGAINVVCTGFLLTWCSSTNSMALTAYTYLTIFDLFSLITCLISYWVMMKKPSPTYSFGFERFEVLSVFASTVLAQLGALFILKESAERFVEQPEIHTGRLLVGTFVALCFNLFSMLSIRNKPFAYVSEAASTSWLQEHVADLSRSLCGIIPGLSSIFLPRMNPFVLIDIAGALALCITYMLIEINNYFAVDTASAIAIAVMTFGTMYPMSVYSGKVLLQTTPPHVIGQLDKLLREVSTLDGVLEVRNEHFWTLGFGTMAGSVHVRIRRDANEQMVLAHVTNRLNTLVSSLTVQIFKDEWARPVLASGAMPPNMLNIPDHHVIQMPSLKSTMDELNPMTSTPSKPSSPPPEFAFNTPGKNMNPVILSNNQTRPSGVGFNYGTTPYTTTFNHGLGVPGIGNTQGLRTGLTNVANRYGTYTPGQFTQFKQ</sequence>
<dbReference type="EMBL" id="CR761129">
    <property type="protein sequence ID" value="CAJ82110.1"/>
    <property type="molecule type" value="mRNA"/>
</dbReference>
<dbReference type="EMBL" id="CR848235">
    <property type="protein sequence ID" value="CAJ82938.1"/>
    <property type="molecule type" value="mRNA"/>
</dbReference>
<dbReference type="EMBL" id="BC088526">
    <property type="protein sequence ID" value="AAH88526.1"/>
    <property type="molecule type" value="mRNA"/>
</dbReference>
<dbReference type="RefSeq" id="NP_001011444.1">
    <property type="nucleotide sequence ID" value="NM_001011444.1"/>
</dbReference>
<dbReference type="SMR" id="Q5I0B2"/>
<dbReference type="FunCoup" id="Q5I0B2">
    <property type="interactions" value="1516"/>
</dbReference>
<dbReference type="STRING" id="8364.ENSXETP00000016734"/>
<dbReference type="PaxDb" id="8364-ENSXETP00000054089"/>
<dbReference type="DNASU" id="496932"/>
<dbReference type="GeneID" id="496932"/>
<dbReference type="KEGG" id="xtr:496932"/>
<dbReference type="AGR" id="Xenbase:XB-GENE-5779445"/>
<dbReference type="CTD" id="55676"/>
<dbReference type="Xenbase" id="XB-GENE-5779445">
    <property type="gene designation" value="slc30a6"/>
</dbReference>
<dbReference type="eggNOG" id="KOG1484">
    <property type="taxonomic scope" value="Eukaryota"/>
</dbReference>
<dbReference type="InParanoid" id="Q5I0B2"/>
<dbReference type="OMA" id="NIVCTGF"/>
<dbReference type="OrthoDB" id="5382797at2759"/>
<dbReference type="Proteomes" id="UP000008143">
    <property type="component" value="Chromosome 5"/>
</dbReference>
<dbReference type="Bgee" id="ENSXETG00000008384">
    <property type="expression patterns" value="Expressed in egg cell and 13 other cell types or tissues"/>
</dbReference>
<dbReference type="ExpressionAtlas" id="Q5I0B2">
    <property type="expression patterns" value="differential"/>
</dbReference>
<dbReference type="GO" id="GO:0032588">
    <property type="term" value="C:trans-Golgi network membrane"/>
    <property type="evidence" value="ECO:0000250"/>
    <property type="project" value="UniProtKB"/>
</dbReference>
<dbReference type="GO" id="GO:0008324">
    <property type="term" value="F:monoatomic cation transmembrane transporter activity"/>
    <property type="evidence" value="ECO:0007669"/>
    <property type="project" value="InterPro"/>
</dbReference>
<dbReference type="GO" id="GO:1904257">
    <property type="term" value="P:zinc ion import into Golgi lumen"/>
    <property type="evidence" value="ECO:0000250"/>
    <property type="project" value="UniProtKB"/>
</dbReference>
<dbReference type="FunFam" id="1.20.1510.10:FF:000009">
    <property type="entry name" value="zinc transporter 6 isoform X1"/>
    <property type="match status" value="1"/>
</dbReference>
<dbReference type="Gene3D" id="1.20.1510.10">
    <property type="entry name" value="Cation efflux protein transmembrane domain"/>
    <property type="match status" value="1"/>
</dbReference>
<dbReference type="InterPro" id="IPR002524">
    <property type="entry name" value="Cation_efflux"/>
</dbReference>
<dbReference type="InterPro" id="IPR027469">
    <property type="entry name" value="Cation_efflux_TMD_sf"/>
</dbReference>
<dbReference type="InterPro" id="IPR052005">
    <property type="entry name" value="CDF_SLC30A"/>
</dbReference>
<dbReference type="NCBIfam" id="TIGR01297">
    <property type="entry name" value="CDF"/>
    <property type="match status" value="1"/>
</dbReference>
<dbReference type="PANTHER" id="PTHR46531">
    <property type="entry name" value="ZINC TRANSPORTER 6"/>
    <property type="match status" value="1"/>
</dbReference>
<dbReference type="PANTHER" id="PTHR46531:SF1">
    <property type="entry name" value="ZINC TRANSPORTER 6"/>
    <property type="match status" value="1"/>
</dbReference>
<dbReference type="Pfam" id="PF01545">
    <property type="entry name" value="Cation_efflux"/>
    <property type="match status" value="1"/>
</dbReference>
<dbReference type="SUPFAM" id="SSF161111">
    <property type="entry name" value="Cation efflux protein transmembrane domain-like"/>
    <property type="match status" value="1"/>
</dbReference>
<proteinExistence type="evidence at transcript level"/>
<comment type="function">
    <text evidence="1">Has probably no intrinsic transporter activity but together with SLC30A5 forms a functional zinc ion:proton antiporter heterodimer, mediating zinc entry into the lumen of organelles along the secretory pathway. As part of that zinc ion:proton antiporter, contributes to zinc ion homeostasis within the early secretory pathway and regulates the activation and folding of enzymes like alkaline phosphatases and enzymes involved in phosphatidylinositol glycan anchor biosynthesis.</text>
</comment>
<comment type="subunit">
    <text evidence="1">Heterodimer with SLC30A5; form a functional zinc ion transmembrane transporter.</text>
</comment>
<comment type="subcellular location">
    <subcellularLocation>
        <location evidence="1">Golgi apparatus</location>
        <location evidence="1">trans-Golgi network membrane</location>
        <topology evidence="2">Multi-pass membrane protein</topology>
    </subcellularLocation>
</comment>
<comment type="similarity">
    <text evidence="3">Belongs to the cation diffusion facilitator (CDF) transporter (TC 2.A.4) family. SLC30A subfamily.</text>
</comment>
<comment type="caution">
    <text evidence="1">Hydrophilic histidine residues that participate to zinc binding in transporters of the family are not conserved in SLC30A6.</text>
</comment>
<evidence type="ECO:0000250" key="1">
    <source>
        <dbReference type="UniProtKB" id="Q6NXT4"/>
    </source>
</evidence>
<evidence type="ECO:0000255" key="2"/>
<evidence type="ECO:0000305" key="3"/>
<name>ZNT6_XENTR</name>
<keyword id="KW-0333">Golgi apparatus</keyword>
<keyword id="KW-0406">Ion transport</keyword>
<keyword id="KW-0472">Membrane</keyword>
<keyword id="KW-1185">Reference proteome</keyword>
<keyword id="KW-0812">Transmembrane</keyword>
<keyword id="KW-1133">Transmembrane helix</keyword>
<keyword id="KW-0813">Transport</keyword>
<keyword id="KW-0862">Zinc</keyword>
<keyword id="KW-0864">Zinc transport</keyword>
<gene>
    <name type="primary">slc30a6</name>
    <name type="synonym">znt6</name>
    <name type="ORF">TEgg064j23.1</name>
    <name type="ORF">TTpA009a14.1</name>
</gene>
<accession>Q5I0B2</accession>
<accession>Q28EI6</accession>
<protein>
    <recommendedName>
        <fullName>Zinc transporter 6</fullName>
        <shortName>ZnT-6</shortName>
    </recommendedName>
    <alternativeName>
        <fullName>Solute carrier family 30 member 6</fullName>
    </alternativeName>
</protein>
<organism>
    <name type="scientific">Xenopus tropicalis</name>
    <name type="common">Western clawed frog</name>
    <name type="synonym">Silurana tropicalis</name>
    <dbReference type="NCBI Taxonomy" id="8364"/>
    <lineage>
        <taxon>Eukaryota</taxon>
        <taxon>Metazoa</taxon>
        <taxon>Chordata</taxon>
        <taxon>Craniata</taxon>
        <taxon>Vertebrata</taxon>
        <taxon>Euteleostomi</taxon>
        <taxon>Amphibia</taxon>
        <taxon>Batrachia</taxon>
        <taxon>Anura</taxon>
        <taxon>Pipoidea</taxon>
        <taxon>Pipidae</taxon>
        <taxon>Xenopodinae</taxon>
        <taxon>Xenopus</taxon>
        <taxon>Silurana</taxon>
    </lineage>
</organism>
<reference key="1">
    <citation type="submission" date="2006-10" db="EMBL/GenBank/DDBJ databases">
        <authorList>
            <consortium name="Sanger Xenopus tropicalis EST/cDNA project"/>
        </authorList>
    </citation>
    <scope>NUCLEOTIDE SEQUENCE [LARGE SCALE MRNA]</scope>
    <source>
        <tissue>Egg</tissue>
        <tissue>Tadpole</tissue>
    </source>
</reference>
<reference key="2">
    <citation type="submission" date="2004-12" db="EMBL/GenBank/DDBJ databases">
        <authorList>
            <consortium name="NIH - Xenopus Gene Collection (XGC) project"/>
        </authorList>
    </citation>
    <scope>NUCLEOTIDE SEQUENCE [LARGE SCALE MRNA]</scope>
    <source>
        <tissue>Embryo</tissue>
    </source>
</reference>